<accession>A9WVV8</accession>
<protein>
    <recommendedName>
        <fullName evidence="1">D-aminopeptidase</fullName>
        <ecNumber evidence="1">3.4.11.19</ecNumber>
    </recommendedName>
</protein>
<dbReference type="EC" id="3.4.11.19" evidence="1"/>
<dbReference type="EMBL" id="CP000912">
    <property type="protein sequence ID" value="ABY39894.1"/>
    <property type="molecule type" value="Genomic_DNA"/>
</dbReference>
<dbReference type="RefSeq" id="WP_002965700.1">
    <property type="nucleotide sequence ID" value="NC_010167.1"/>
</dbReference>
<dbReference type="SMR" id="A9WVV8"/>
<dbReference type="MEROPS" id="S12.002"/>
<dbReference type="KEGG" id="bmt:BSUIS_B0939"/>
<dbReference type="HOGENOM" id="CLU_020027_0_4_5"/>
<dbReference type="Proteomes" id="UP000008545">
    <property type="component" value="Chromosome II"/>
</dbReference>
<dbReference type="GO" id="GO:0004177">
    <property type="term" value="F:aminopeptidase activity"/>
    <property type="evidence" value="ECO:0007669"/>
    <property type="project" value="UniProtKB-UniRule"/>
</dbReference>
<dbReference type="GO" id="GO:0006508">
    <property type="term" value="P:proteolysis"/>
    <property type="evidence" value="ECO:0007669"/>
    <property type="project" value="UniProtKB-KW"/>
</dbReference>
<dbReference type="Gene3D" id="2.40.128.50">
    <property type="match status" value="2"/>
</dbReference>
<dbReference type="Gene3D" id="3.40.710.10">
    <property type="entry name" value="DD-peptidase/beta-lactamase superfamily"/>
    <property type="match status" value="1"/>
</dbReference>
<dbReference type="HAMAP" id="MF_01960">
    <property type="entry name" value="D_aminopeptidase"/>
    <property type="match status" value="1"/>
</dbReference>
<dbReference type="InterPro" id="IPR050491">
    <property type="entry name" value="Bact_CellWall_Synth/Modif"/>
</dbReference>
<dbReference type="InterPro" id="IPR001466">
    <property type="entry name" value="Beta-lactam-related"/>
</dbReference>
<dbReference type="InterPro" id="IPR012338">
    <property type="entry name" value="Beta-lactam/transpept-like"/>
</dbReference>
<dbReference type="InterPro" id="IPR027279">
    <property type="entry name" value="D_amino_pept/lipop_sf"/>
</dbReference>
<dbReference type="InterPro" id="IPR023645">
    <property type="entry name" value="DAP"/>
</dbReference>
<dbReference type="InterPro" id="IPR012856">
    <property type="entry name" value="DAP_B_dom"/>
</dbReference>
<dbReference type="NCBIfam" id="NF009622">
    <property type="entry name" value="PRK13128.1"/>
    <property type="match status" value="1"/>
</dbReference>
<dbReference type="PANTHER" id="PTHR46825:SF9">
    <property type="entry name" value="BETA-LACTAMASE-RELATED DOMAIN-CONTAINING PROTEIN"/>
    <property type="match status" value="1"/>
</dbReference>
<dbReference type="PANTHER" id="PTHR46825">
    <property type="entry name" value="D-ALANYL-D-ALANINE-CARBOXYPEPTIDASE/ENDOPEPTIDASE AMPH"/>
    <property type="match status" value="1"/>
</dbReference>
<dbReference type="Pfam" id="PF00144">
    <property type="entry name" value="Beta-lactamase"/>
    <property type="match status" value="1"/>
</dbReference>
<dbReference type="Pfam" id="PF07930">
    <property type="entry name" value="DAP_B"/>
    <property type="match status" value="1"/>
</dbReference>
<dbReference type="SUPFAM" id="SSF56601">
    <property type="entry name" value="beta-lactamase/transpeptidase-like"/>
    <property type="match status" value="1"/>
</dbReference>
<dbReference type="SUPFAM" id="SSF50886">
    <property type="entry name" value="D-aminopeptidase, middle and C-terminal domains"/>
    <property type="match status" value="2"/>
</dbReference>
<keyword id="KW-0031">Aminopeptidase</keyword>
<keyword id="KW-0378">Hydrolase</keyword>
<keyword id="KW-0645">Protease</keyword>
<feature type="chain" id="PRO_1000088536" description="D-aminopeptidase">
    <location>
        <begin position="1"/>
        <end position="518"/>
    </location>
</feature>
<feature type="region of interest" description="Important for specificity" evidence="1">
    <location>
        <begin position="477"/>
        <end position="487"/>
    </location>
</feature>
<feature type="active site" description="Nucleophile" evidence="1">
    <location>
        <position position="62"/>
    </location>
</feature>
<feature type="active site" description="Proton donor/acceptor" evidence="1">
    <location>
        <position position="65"/>
    </location>
</feature>
<feature type="binding site" evidence="1">
    <location>
        <position position="481"/>
    </location>
    <ligand>
        <name>substrate</name>
    </ligand>
</feature>
<comment type="function">
    <text evidence="1">Hydrolyzes N-terminal residues in D-amino acid-containing peptides.</text>
</comment>
<comment type="catalytic activity">
    <reaction evidence="1">
        <text>Release of an N-terminal D-amino acid from a peptide, Xaa-|-Yaa-, in which Xaa is preferably D-Ala, D-Ser or D-Thr. D-amino acid amides and methyl esters also are hydrolyzed, as is glycine amide.</text>
        <dbReference type="EC" id="3.4.11.19"/>
    </reaction>
</comment>
<comment type="activity regulation">
    <text evidence="1">Inhibited by beta-lactam compounds such as 6-aminopenicillic acid, 7-aminocephalosporanic acid, benzylpenicillin and ampicillin. Inhibited by p-chloromercuribenzoate.</text>
</comment>
<comment type="subunit">
    <text evidence="1">Homodimer.</text>
</comment>
<comment type="similarity">
    <text evidence="1">Belongs to the peptidase S12 family.</text>
</comment>
<organism>
    <name type="scientific">Brucella suis (strain ATCC 23445 / NCTC 10510)</name>
    <dbReference type="NCBI Taxonomy" id="470137"/>
    <lineage>
        <taxon>Bacteria</taxon>
        <taxon>Pseudomonadati</taxon>
        <taxon>Pseudomonadota</taxon>
        <taxon>Alphaproteobacteria</taxon>
        <taxon>Hyphomicrobiales</taxon>
        <taxon>Brucellaceae</taxon>
        <taxon>Brucella/Ochrobactrum group</taxon>
        <taxon>Brucella</taxon>
    </lineage>
</organism>
<sequence length="518" mass="56873">MPNIDLPTLEAFVHAIPQNYKGPGGAVAVVRNGEIVLRHAWGFADLAARKAMTPETRMPICSVSKQFTCAVLLDCIGEPEMLDSALAAYLDQFEDGRPAVRDLCNNQSGLRDYWALTVLCGAAPEGIFLPDQAQNLLRRLKTTHFAPGTHYSYCNGNFRILADLIEQHTGRSLADLLAERIFAPAAMKTAELIPDTALFNECTGYEGDTVRGFLPAINRIHWLGDAGICASLDDMIAWEQFIDRTRHDENGLYRRLSSPQTFADGAPAPYGFGLKFEETGGKRLTGHGGALRGWRCQRWHCADERISTIVMFNFEGNASDAALKMMNAALGIPPAKPVRAQANPGWFGSWLNPETGLVLSLEDAGGGRMKARFGTGPEIMDISGENEAQSSMTTLRRDGDMIHLARKDENLHLAMHRLKGEARQDIAGRYRSDELEADLLLVSEGGAIYGAFEGFLGKSDMYPLYAAGPDVWLLPVQRSMDAPSPGEWKLVFHRDAAGRITGVTVGCWLARGVEYKRL</sequence>
<evidence type="ECO:0000255" key="1">
    <source>
        <dbReference type="HAMAP-Rule" id="MF_01960"/>
    </source>
</evidence>
<gene>
    <name evidence="1" type="primary">dap</name>
    <name type="ordered locus">BSUIS_B0939</name>
</gene>
<name>DAP_BRUSI</name>
<proteinExistence type="inferred from homology"/>
<reference key="1">
    <citation type="submission" date="2007-12" db="EMBL/GenBank/DDBJ databases">
        <title>Brucella suis ATCC 23445 whole genome shotgun sequencing project.</title>
        <authorList>
            <person name="Setubal J.C."/>
            <person name="Bowns C."/>
            <person name="Boyle S."/>
            <person name="Crasta O.R."/>
            <person name="Czar M.J."/>
            <person name="Dharmanolla C."/>
            <person name="Gillespie J.J."/>
            <person name="Kenyon R.W."/>
            <person name="Lu J."/>
            <person name="Mane S."/>
            <person name="Mohapatra S."/>
            <person name="Nagrani S."/>
            <person name="Purkayastha A."/>
            <person name="Rajasimha H.K."/>
            <person name="Shallom J.M."/>
            <person name="Shallom S."/>
            <person name="Shukla M."/>
            <person name="Snyder E.E."/>
            <person name="Sobral B.W."/>
            <person name="Wattam A.R."/>
            <person name="Will R."/>
            <person name="Williams K."/>
            <person name="Yoo H."/>
            <person name="Bruce D."/>
            <person name="Detter C."/>
            <person name="Munk C."/>
            <person name="Brettin T.S."/>
        </authorList>
    </citation>
    <scope>NUCLEOTIDE SEQUENCE [LARGE SCALE GENOMIC DNA]</scope>
    <source>
        <strain>ATCC 23445 / NCTC 10510</strain>
    </source>
</reference>